<sequence>MTLVQVMAQDDRDQVVLRTADRTEIADTLRPFGIQLDRWPLRELPADAGQDAVLAAYRAEVDEVCRAGGYRFVDVVRLVPAPEDPEWPARAAAARGRFLDEHRHTEHEVRFFVEGRGCFYLHLGDKVYALVCEAGDLVSVPAGTTHWFDMGAQPHFCAIRFFEREDGWIGDFTGSPIASTMPTLDELVG</sequence>
<feature type="chain" id="PRO_0000359212" description="Acireductone dioxygenase 1">
    <location>
        <begin position="1"/>
        <end position="189"/>
    </location>
</feature>
<feature type="binding site" evidence="1">
    <location>
        <position position="102"/>
    </location>
    <ligand>
        <name>Fe(2+)</name>
        <dbReference type="ChEBI" id="CHEBI:29033"/>
    </ligand>
</feature>
<feature type="binding site" evidence="1">
    <location>
        <position position="102"/>
    </location>
    <ligand>
        <name>Ni(2+)</name>
        <dbReference type="ChEBI" id="CHEBI:49786"/>
    </ligand>
</feature>
<feature type="binding site" evidence="1">
    <location>
        <position position="104"/>
    </location>
    <ligand>
        <name>Fe(2+)</name>
        <dbReference type="ChEBI" id="CHEBI:29033"/>
    </ligand>
</feature>
<feature type="binding site" evidence="1">
    <location>
        <position position="104"/>
    </location>
    <ligand>
        <name>Ni(2+)</name>
        <dbReference type="ChEBI" id="CHEBI:49786"/>
    </ligand>
</feature>
<feature type="binding site" evidence="1">
    <location>
        <position position="108"/>
    </location>
    <ligand>
        <name>Fe(2+)</name>
        <dbReference type="ChEBI" id="CHEBI:29033"/>
    </ligand>
</feature>
<feature type="binding site" evidence="1">
    <location>
        <position position="108"/>
    </location>
    <ligand>
        <name>Ni(2+)</name>
        <dbReference type="ChEBI" id="CHEBI:49786"/>
    </ligand>
</feature>
<feature type="binding site" evidence="1">
    <location>
        <position position="146"/>
    </location>
    <ligand>
        <name>Fe(2+)</name>
        <dbReference type="ChEBI" id="CHEBI:29033"/>
    </ligand>
</feature>
<feature type="binding site" evidence="1">
    <location>
        <position position="146"/>
    </location>
    <ligand>
        <name>Ni(2+)</name>
        <dbReference type="ChEBI" id="CHEBI:49786"/>
    </ligand>
</feature>
<feature type="site" description="May play a role in metal incorporation in vivo" evidence="1">
    <location>
        <position position="101"/>
    </location>
</feature>
<feature type="site" description="Important to generate the dianion" evidence="1">
    <location>
        <position position="110"/>
    </location>
</feature>
<proteinExistence type="inferred from homology"/>
<protein>
    <recommendedName>
        <fullName evidence="1">Acireductone dioxygenase 1</fullName>
    </recommendedName>
    <alternativeName>
        <fullName evidence="1">1,2-dihydroxy-3-keto-5-methylthiopentene dioxygenase 1</fullName>
        <shortName evidence="1">DHK-MTPene dioxygenase 1</shortName>
    </alternativeName>
    <alternativeName>
        <fullName evidence="1">Acireductone dioxygenase (Fe(2+)-requiring) 1</fullName>
        <shortName evidence="1">ARD' 1</shortName>
        <shortName evidence="1">Fe-ARD 1</shortName>
        <ecNumber evidence="1">1.13.11.54</ecNumber>
    </alternativeName>
    <alternativeName>
        <fullName evidence="1">Acireductone dioxygenase (Ni(2+)-requiring) 1</fullName>
        <shortName evidence="1">ARD 1</shortName>
        <shortName evidence="1">Ni-ARD 1</shortName>
        <ecNumber evidence="1">1.13.11.53</ecNumber>
    </alternativeName>
</protein>
<reference key="1">
    <citation type="journal article" date="2004" name="Proc. Natl. Acad. Sci. U.S.A.">
        <title>The complete genomic sequence of Nocardia farcinica IFM 10152.</title>
        <authorList>
            <person name="Ishikawa J."/>
            <person name="Yamashita A."/>
            <person name="Mikami Y."/>
            <person name="Hoshino Y."/>
            <person name="Kurita H."/>
            <person name="Hotta K."/>
            <person name="Shiba T."/>
            <person name="Hattori M."/>
        </authorList>
    </citation>
    <scope>NUCLEOTIDE SEQUENCE [LARGE SCALE GENOMIC DNA]</scope>
    <source>
        <strain>IFM 10152</strain>
    </source>
</reference>
<gene>
    <name evidence="1" type="primary">mtnD1</name>
    <name type="ordered locus">NFA_14460</name>
</gene>
<keyword id="KW-0028">Amino-acid biosynthesis</keyword>
<keyword id="KW-0223">Dioxygenase</keyword>
<keyword id="KW-0408">Iron</keyword>
<keyword id="KW-0479">Metal-binding</keyword>
<keyword id="KW-0486">Methionine biosynthesis</keyword>
<keyword id="KW-0533">Nickel</keyword>
<keyword id="KW-0560">Oxidoreductase</keyword>
<keyword id="KW-1185">Reference proteome</keyword>
<evidence type="ECO:0000255" key="1">
    <source>
        <dbReference type="HAMAP-Rule" id="MF_01682"/>
    </source>
</evidence>
<comment type="function">
    <text evidence="1">Catalyzes 2 different reactions between oxygen and the acireductone 1,2-dihydroxy-3-keto-5-methylthiopentene (DHK-MTPene) depending upon the metal bound in the active site. Fe-containing acireductone dioxygenase (Fe-ARD) produces formate and 2-keto-4-methylthiobutyrate (KMTB), the alpha-ketoacid precursor of methionine in the methionine recycle pathway. Ni-containing acireductone dioxygenase (Ni-ARD) produces methylthiopropionate, carbon monoxide and formate, and does not lie on the methionine recycle pathway.</text>
</comment>
<comment type="catalytic activity">
    <reaction evidence="1">
        <text>1,2-dihydroxy-5-(methylsulfanyl)pent-1-en-3-one + O2 = 3-(methylsulfanyl)propanoate + CO + formate + 2 H(+)</text>
        <dbReference type="Rhea" id="RHEA:14161"/>
        <dbReference type="ChEBI" id="CHEBI:15378"/>
        <dbReference type="ChEBI" id="CHEBI:15379"/>
        <dbReference type="ChEBI" id="CHEBI:15740"/>
        <dbReference type="ChEBI" id="CHEBI:17245"/>
        <dbReference type="ChEBI" id="CHEBI:49016"/>
        <dbReference type="ChEBI" id="CHEBI:49252"/>
        <dbReference type="EC" id="1.13.11.53"/>
    </reaction>
</comment>
<comment type="catalytic activity">
    <reaction evidence="1">
        <text>1,2-dihydroxy-5-(methylsulfanyl)pent-1-en-3-one + O2 = 4-methylsulfanyl-2-oxobutanoate + formate + 2 H(+)</text>
        <dbReference type="Rhea" id="RHEA:24504"/>
        <dbReference type="ChEBI" id="CHEBI:15378"/>
        <dbReference type="ChEBI" id="CHEBI:15379"/>
        <dbReference type="ChEBI" id="CHEBI:15740"/>
        <dbReference type="ChEBI" id="CHEBI:16723"/>
        <dbReference type="ChEBI" id="CHEBI:49252"/>
        <dbReference type="EC" id="1.13.11.54"/>
    </reaction>
</comment>
<comment type="cofactor">
    <cofactor evidence="1">
        <name>Fe(2+)</name>
        <dbReference type="ChEBI" id="CHEBI:29033"/>
    </cofactor>
    <text evidence="1">Binds 1 Fe(2+) cation per monomer.</text>
</comment>
<comment type="cofactor">
    <cofactor evidence="1">
        <name>Ni(2+)</name>
        <dbReference type="ChEBI" id="CHEBI:49786"/>
    </cofactor>
    <text evidence="1">Binds 1 nickel ion per monomer.</text>
</comment>
<comment type="pathway">
    <text evidence="1">Amino-acid biosynthesis; L-methionine biosynthesis via salvage pathway; L-methionine from S-methyl-5-thio-alpha-D-ribose 1-phosphate: step 5/6.</text>
</comment>
<comment type="subunit">
    <text evidence="1">Monomer.</text>
</comment>
<comment type="similarity">
    <text evidence="1">Belongs to the acireductone dioxygenase (ARD) family.</text>
</comment>
<accession>Q5YZV0</accession>
<dbReference type="EC" id="1.13.11.54" evidence="1"/>
<dbReference type="EC" id="1.13.11.53" evidence="1"/>
<dbReference type="EMBL" id="AP006618">
    <property type="protein sequence ID" value="BAD56291.1"/>
    <property type="molecule type" value="Genomic_DNA"/>
</dbReference>
<dbReference type="RefSeq" id="WP_011207976.1">
    <property type="nucleotide sequence ID" value="NC_006361.1"/>
</dbReference>
<dbReference type="SMR" id="Q5YZV0"/>
<dbReference type="STRING" id="247156.NFA_14460"/>
<dbReference type="GeneID" id="61132262"/>
<dbReference type="KEGG" id="nfa:NFA_14460"/>
<dbReference type="eggNOG" id="COG1791">
    <property type="taxonomic scope" value="Bacteria"/>
</dbReference>
<dbReference type="HOGENOM" id="CLU_125400_0_0_11"/>
<dbReference type="OrthoDB" id="9795636at2"/>
<dbReference type="UniPathway" id="UPA00904">
    <property type="reaction ID" value="UER00878"/>
</dbReference>
<dbReference type="Proteomes" id="UP000006820">
    <property type="component" value="Chromosome"/>
</dbReference>
<dbReference type="GO" id="GO:0010308">
    <property type="term" value="F:acireductone dioxygenase (Ni2+-requiring) activity"/>
    <property type="evidence" value="ECO:0007669"/>
    <property type="project" value="UniProtKB-UniRule"/>
</dbReference>
<dbReference type="GO" id="GO:0010309">
    <property type="term" value="F:acireductone dioxygenase [iron(II)-requiring] activity"/>
    <property type="evidence" value="ECO:0007669"/>
    <property type="project" value="UniProtKB-UniRule"/>
</dbReference>
<dbReference type="GO" id="GO:0005506">
    <property type="term" value="F:iron ion binding"/>
    <property type="evidence" value="ECO:0007669"/>
    <property type="project" value="UniProtKB-UniRule"/>
</dbReference>
<dbReference type="GO" id="GO:0016151">
    <property type="term" value="F:nickel cation binding"/>
    <property type="evidence" value="ECO:0007669"/>
    <property type="project" value="UniProtKB-UniRule"/>
</dbReference>
<dbReference type="GO" id="GO:0019509">
    <property type="term" value="P:L-methionine salvage from methylthioadenosine"/>
    <property type="evidence" value="ECO:0007669"/>
    <property type="project" value="UniProtKB-UniRule"/>
</dbReference>
<dbReference type="GO" id="GO:0019284">
    <property type="term" value="P:L-methionine salvage from S-adenosylmethionine"/>
    <property type="evidence" value="ECO:0007669"/>
    <property type="project" value="InterPro"/>
</dbReference>
<dbReference type="CDD" id="cd02232">
    <property type="entry name" value="cupin_ARD"/>
    <property type="match status" value="1"/>
</dbReference>
<dbReference type="Gene3D" id="2.60.120.10">
    <property type="entry name" value="Jelly Rolls"/>
    <property type="match status" value="1"/>
</dbReference>
<dbReference type="HAMAP" id="MF_01682">
    <property type="entry name" value="Salvage_MtnD"/>
    <property type="match status" value="1"/>
</dbReference>
<dbReference type="InterPro" id="IPR004313">
    <property type="entry name" value="ARD"/>
</dbReference>
<dbReference type="InterPro" id="IPR023956">
    <property type="entry name" value="ARD_bac"/>
</dbReference>
<dbReference type="InterPro" id="IPR014710">
    <property type="entry name" value="RmlC-like_jellyroll"/>
</dbReference>
<dbReference type="InterPro" id="IPR011051">
    <property type="entry name" value="RmlC_Cupin_sf"/>
</dbReference>
<dbReference type="PANTHER" id="PTHR23418">
    <property type="entry name" value="ACIREDUCTONE DIOXYGENASE"/>
    <property type="match status" value="1"/>
</dbReference>
<dbReference type="PANTHER" id="PTHR23418:SF0">
    <property type="entry name" value="ACIREDUCTONE DIOXYGENASE"/>
    <property type="match status" value="1"/>
</dbReference>
<dbReference type="Pfam" id="PF03079">
    <property type="entry name" value="ARD"/>
    <property type="match status" value="1"/>
</dbReference>
<dbReference type="SUPFAM" id="SSF51182">
    <property type="entry name" value="RmlC-like cupins"/>
    <property type="match status" value="1"/>
</dbReference>
<name>MTND1_NOCFA</name>
<organism>
    <name type="scientific">Nocardia farcinica (strain IFM 10152)</name>
    <dbReference type="NCBI Taxonomy" id="247156"/>
    <lineage>
        <taxon>Bacteria</taxon>
        <taxon>Bacillati</taxon>
        <taxon>Actinomycetota</taxon>
        <taxon>Actinomycetes</taxon>
        <taxon>Mycobacteriales</taxon>
        <taxon>Nocardiaceae</taxon>
        <taxon>Nocardia</taxon>
    </lineage>
</organism>